<proteinExistence type="inferred from homology"/>
<keyword id="KW-0143">Chaperone</keyword>
<keyword id="KW-0963">Cytoplasm</keyword>
<keyword id="KW-1185">Reference proteome</keyword>
<keyword id="KW-0694">RNA-binding</keyword>
<protein>
    <recommendedName>
        <fullName evidence="1">RNA chaperone ProQ</fullName>
    </recommendedName>
</protein>
<organism>
    <name type="scientific">Escherichia coli (strain 55989 / EAEC)</name>
    <dbReference type="NCBI Taxonomy" id="585055"/>
    <lineage>
        <taxon>Bacteria</taxon>
        <taxon>Pseudomonadati</taxon>
        <taxon>Pseudomonadota</taxon>
        <taxon>Gammaproteobacteria</taxon>
        <taxon>Enterobacterales</taxon>
        <taxon>Enterobacteriaceae</taxon>
        <taxon>Escherichia</taxon>
    </lineage>
</organism>
<accession>B7L7N3</accession>
<dbReference type="EMBL" id="CU928145">
    <property type="protein sequence ID" value="CAU97867.1"/>
    <property type="molecule type" value="Genomic_DNA"/>
</dbReference>
<dbReference type="RefSeq" id="WP_000431370.1">
    <property type="nucleotide sequence ID" value="NC_011748.1"/>
</dbReference>
<dbReference type="SMR" id="B7L7N3"/>
<dbReference type="GeneID" id="93776081"/>
<dbReference type="KEGG" id="eck:EC55989_2008"/>
<dbReference type="HOGENOM" id="CLU_113254_0_0_6"/>
<dbReference type="Proteomes" id="UP000000746">
    <property type="component" value="Chromosome"/>
</dbReference>
<dbReference type="GO" id="GO:0005829">
    <property type="term" value="C:cytosol"/>
    <property type="evidence" value="ECO:0007669"/>
    <property type="project" value="TreeGrafter"/>
</dbReference>
<dbReference type="GO" id="GO:0033592">
    <property type="term" value="F:RNA strand annealing activity"/>
    <property type="evidence" value="ECO:0007669"/>
    <property type="project" value="UniProtKB-UniRule"/>
</dbReference>
<dbReference type="GO" id="GO:0034057">
    <property type="term" value="F:RNA strand-exchange activity"/>
    <property type="evidence" value="ECO:0007669"/>
    <property type="project" value="UniProtKB-UniRule"/>
</dbReference>
<dbReference type="GO" id="GO:0010608">
    <property type="term" value="P:post-transcriptional regulation of gene expression"/>
    <property type="evidence" value="ECO:0007669"/>
    <property type="project" value="InterPro"/>
</dbReference>
<dbReference type="FunFam" id="1.10.1710.10:FF:000001">
    <property type="entry name" value="RNA chaperone ProQ"/>
    <property type="match status" value="1"/>
</dbReference>
<dbReference type="Gene3D" id="1.10.1710.10">
    <property type="entry name" value="ProQ/FinO domain"/>
    <property type="match status" value="1"/>
</dbReference>
<dbReference type="HAMAP" id="MF_00749">
    <property type="entry name" value="ProQ"/>
    <property type="match status" value="1"/>
</dbReference>
<dbReference type="InterPro" id="IPR023529">
    <property type="entry name" value="ProQ"/>
</dbReference>
<dbReference type="InterPro" id="IPR016103">
    <property type="entry name" value="ProQ/FinO"/>
</dbReference>
<dbReference type="InterPro" id="IPR036442">
    <property type="entry name" value="ProQ/FinO_sf"/>
</dbReference>
<dbReference type="InterPro" id="IPR035236">
    <property type="entry name" value="ProQ_C"/>
</dbReference>
<dbReference type="NCBIfam" id="NF003434">
    <property type="entry name" value="PRK04950.1"/>
    <property type="match status" value="1"/>
</dbReference>
<dbReference type="PANTHER" id="PTHR38106">
    <property type="entry name" value="RNA CHAPERONE PROQ"/>
    <property type="match status" value="1"/>
</dbReference>
<dbReference type="PANTHER" id="PTHR38106:SF1">
    <property type="entry name" value="RNA CHAPERONE PROQ"/>
    <property type="match status" value="1"/>
</dbReference>
<dbReference type="Pfam" id="PF04352">
    <property type="entry name" value="ProQ"/>
    <property type="match status" value="1"/>
</dbReference>
<dbReference type="Pfam" id="PF17516">
    <property type="entry name" value="ProQ_C"/>
    <property type="match status" value="1"/>
</dbReference>
<dbReference type="SMART" id="SM00945">
    <property type="entry name" value="ProQ"/>
    <property type="match status" value="1"/>
</dbReference>
<dbReference type="SUPFAM" id="SSF48657">
    <property type="entry name" value="FinO-like"/>
    <property type="match status" value="1"/>
</dbReference>
<reference key="1">
    <citation type="journal article" date="2009" name="PLoS Genet.">
        <title>Organised genome dynamics in the Escherichia coli species results in highly diverse adaptive paths.</title>
        <authorList>
            <person name="Touchon M."/>
            <person name="Hoede C."/>
            <person name="Tenaillon O."/>
            <person name="Barbe V."/>
            <person name="Baeriswyl S."/>
            <person name="Bidet P."/>
            <person name="Bingen E."/>
            <person name="Bonacorsi S."/>
            <person name="Bouchier C."/>
            <person name="Bouvet O."/>
            <person name="Calteau A."/>
            <person name="Chiapello H."/>
            <person name="Clermont O."/>
            <person name="Cruveiller S."/>
            <person name="Danchin A."/>
            <person name="Diard M."/>
            <person name="Dossat C."/>
            <person name="Karoui M.E."/>
            <person name="Frapy E."/>
            <person name="Garry L."/>
            <person name="Ghigo J.M."/>
            <person name="Gilles A.M."/>
            <person name="Johnson J."/>
            <person name="Le Bouguenec C."/>
            <person name="Lescat M."/>
            <person name="Mangenot S."/>
            <person name="Martinez-Jehanne V."/>
            <person name="Matic I."/>
            <person name="Nassif X."/>
            <person name="Oztas S."/>
            <person name="Petit M.A."/>
            <person name="Pichon C."/>
            <person name="Rouy Z."/>
            <person name="Ruf C.S."/>
            <person name="Schneider D."/>
            <person name="Tourret J."/>
            <person name="Vacherie B."/>
            <person name="Vallenet D."/>
            <person name="Medigue C."/>
            <person name="Rocha E.P.C."/>
            <person name="Denamur E."/>
        </authorList>
    </citation>
    <scope>NUCLEOTIDE SEQUENCE [LARGE SCALE GENOMIC DNA]</scope>
    <source>
        <strain>55989 / EAEC</strain>
    </source>
</reference>
<comment type="function">
    <text evidence="1">RNA chaperone with significant RNA binding, RNA strand exchange and RNA duplexing activities. May regulate ProP activity through an RNA-based, post-transcriptional mechanism.</text>
</comment>
<comment type="subcellular location">
    <subcellularLocation>
        <location evidence="1">Cytoplasm</location>
    </subcellularLocation>
</comment>
<comment type="similarity">
    <text evidence="1">Belongs to the ProQ family.</text>
</comment>
<gene>
    <name evidence="1" type="primary">proQ</name>
    <name type="ordered locus">EC55989_2008</name>
</gene>
<sequence>MENQPKLNSSKEVIAFLAERFPHCFSAEGEARPLKIGIFQDLVDRVAGEMNLSKTQLRSALRLYTSSWRYLYGVKPGATRVDLDGNPCGELDEQHVEHARKQLEEAKARVQAQRAEQQAKKREAAAAAGEKEDAPRRERKPRPTTPRRKEGAERKPRAQKPVEKAPKTVKAPREEQHTPVSDISALTVGQALKVKAGQNAMDATVLEITKDGVRVQLNSGMSLIVRAEHLVF</sequence>
<name>PROQ_ECO55</name>
<feature type="chain" id="PRO_1000148343" description="RNA chaperone ProQ">
    <location>
        <begin position="1"/>
        <end position="232"/>
    </location>
</feature>
<feature type="region of interest" description="Disordered" evidence="2">
    <location>
        <begin position="105"/>
        <end position="182"/>
    </location>
</feature>
<feature type="compositionally biased region" description="Basic and acidic residues" evidence="2">
    <location>
        <begin position="117"/>
        <end position="136"/>
    </location>
</feature>
<feature type="compositionally biased region" description="Basic residues" evidence="2">
    <location>
        <begin position="137"/>
        <end position="146"/>
    </location>
</feature>
<feature type="compositionally biased region" description="Basic and acidic residues" evidence="2">
    <location>
        <begin position="147"/>
        <end position="177"/>
    </location>
</feature>
<evidence type="ECO:0000255" key="1">
    <source>
        <dbReference type="HAMAP-Rule" id="MF_00749"/>
    </source>
</evidence>
<evidence type="ECO:0000256" key="2">
    <source>
        <dbReference type="SAM" id="MobiDB-lite"/>
    </source>
</evidence>